<reference key="1">
    <citation type="journal article" date="2003" name="Mol. Microbiol.">
        <title>Genome-based analysis of virulence genes in a non-biofilm-forming Staphylococcus epidermidis strain (ATCC 12228).</title>
        <authorList>
            <person name="Zhang Y.-Q."/>
            <person name="Ren S.-X."/>
            <person name="Li H.-L."/>
            <person name="Wang Y.-X."/>
            <person name="Fu G."/>
            <person name="Yang J."/>
            <person name="Qin Z.-Q."/>
            <person name="Miao Y.-G."/>
            <person name="Wang W.-Y."/>
            <person name="Chen R.-S."/>
            <person name="Shen Y."/>
            <person name="Chen Z."/>
            <person name="Yuan Z.-H."/>
            <person name="Zhao G.-P."/>
            <person name="Qu D."/>
            <person name="Danchin A."/>
            <person name="Wen Y.-M."/>
        </authorList>
    </citation>
    <scope>NUCLEOTIDE SEQUENCE [LARGE SCALE GENOMIC DNA]</scope>
    <source>
        <strain>ATCC 12228 / FDA PCI 1200</strain>
    </source>
</reference>
<keyword id="KW-0413">Isomerase</keyword>
<keyword id="KW-0819">tRNA processing</keyword>
<proteinExistence type="inferred from homology"/>
<name>TRUB_STAES</name>
<protein>
    <recommendedName>
        <fullName evidence="1">tRNA pseudouridine synthase B</fullName>
        <ecNumber evidence="1">5.4.99.25</ecNumber>
    </recommendedName>
    <alternativeName>
        <fullName evidence="1">tRNA pseudouridine(55) synthase</fullName>
        <shortName evidence="1">Psi55 synthase</shortName>
    </alternativeName>
    <alternativeName>
        <fullName evidence="1">tRNA pseudouridylate synthase</fullName>
    </alternativeName>
    <alternativeName>
        <fullName evidence="1">tRNA-uridine isomerase</fullName>
    </alternativeName>
</protein>
<organism>
    <name type="scientific">Staphylococcus epidermidis (strain ATCC 12228 / FDA PCI 1200)</name>
    <dbReference type="NCBI Taxonomy" id="176280"/>
    <lineage>
        <taxon>Bacteria</taxon>
        <taxon>Bacillati</taxon>
        <taxon>Bacillota</taxon>
        <taxon>Bacilli</taxon>
        <taxon>Bacillales</taxon>
        <taxon>Staphylococcaceae</taxon>
        <taxon>Staphylococcus</taxon>
    </lineage>
</organism>
<gene>
    <name evidence="1" type="primary">truB</name>
    <name type="ordered locus">SE_0948</name>
</gene>
<dbReference type="EC" id="5.4.99.25" evidence="1"/>
<dbReference type="EMBL" id="AE015929">
    <property type="protein sequence ID" value="AAO04545.1"/>
    <property type="molecule type" value="Genomic_DNA"/>
</dbReference>
<dbReference type="RefSeq" id="NP_764503.1">
    <property type="nucleotide sequence ID" value="NC_004461.1"/>
</dbReference>
<dbReference type="RefSeq" id="WP_002439525.1">
    <property type="nucleotide sequence ID" value="NZ_WBME01000001.1"/>
</dbReference>
<dbReference type="SMR" id="Q8CMM6"/>
<dbReference type="KEGG" id="sep:SE_0948"/>
<dbReference type="PATRIC" id="fig|176280.10.peg.922"/>
<dbReference type="eggNOG" id="COG0130">
    <property type="taxonomic scope" value="Bacteria"/>
</dbReference>
<dbReference type="HOGENOM" id="CLU_032087_0_1_9"/>
<dbReference type="OrthoDB" id="9802309at2"/>
<dbReference type="Proteomes" id="UP000001411">
    <property type="component" value="Chromosome"/>
</dbReference>
<dbReference type="GO" id="GO:0003723">
    <property type="term" value="F:RNA binding"/>
    <property type="evidence" value="ECO:0007669"/>
    <property type="project" value="InterPro"/>
</dbReference>
<dbReference type="GO" id="GO:0160148">
    <property type="term" value="F:tRNA pseudouridine(55) synthase activity"/>
    <property type="evidence" value="ECO:0007669"/>
    <property type="project" value="UniProtKB-EC"/>
</dbReference>
<dbReference type="GO" id="GO:1990481">
    <property type="term" value="P:mRNA pseudouridine synthesis"/>
    <property type="evidence" value="ECO:0007669"/>
    <property type="project" value="TreeGrafter"/>
</dbReference>
<dbReference type="GO" id="GO:0031119">
    <property type="term" value="P:tRNA pseudouridine synthesis"/>
    <property type="evidence" value="ECO:0007669"/>
    <property type="project" value="UniProtKB-UniRule"/>
</dbReference>
<dbReference type="CDD" id="cd02573">
    <property type="entry name" value="PseudoU_synth_EcTruB"/>
    <property type="match status" value="1"/>
</dbReference>
<dbReference type="FunFam" id="3.30.2350.10:FF:000011">
    <property type="entry name" value="tRNA pseudouridine synthase B"/>
    <property type="match status" value="1"/>
</dbReference>
<dbReference type="Gene3D" id="3.30.2350.10">
    <property type="entry name" value="Pseudouridine synthase"/>
    <property type="match status" value="1"/>
</dbReference>
<dbReference type="HAMAP" id="MF_01080">
    <property type="entry name" value="TruB_bact"/>
    <property type="match status" value="1"/>
</dbReference>
<dbReference type="InterPro" id="IPR020103">
    <property type="entry name" value="PsdUridine_synth_cat_dom_sf"/>
</dbReference>
<dbReference type="InterPro" id="IPR002501">
    <property type="entry name" value="PsdUridine_synth_N"/>
</dbReference>
<dbReference type="InterPro" id="IPR014780">
    <property type="entry name" value="tRNA_psdUridine_synth_TruB"/>
</dbReference>
<dbReference type="InterPro" id="IPR032819">
    <property type="entry name" value="TruB_C"/>
</dbReference>
<dbReference type="NCBIfam" id="TIGR00431">
    <property type="entry name" value="TruB"/>
    <property type="match status" value="1"/>
</dbReference>
<dbReference type="PANTHER" id="PTHR13767:SF2">
    <property type="entry name" value="PSEUDOURIDYLATE SYNTHASE TRUB1"/>
    <property type="match status" value="1"/>
</dbReference>
<dbReference type="PANTHER" id="PTHR13767">
    <property type="entry name" value="TRNA-PSEUDOURIDINE SYNTHASE"/>
    <property type="match status" value="1"/>
</dbReference>
<dbReference type="Pfam" id="PF16198">
    <property type="entry name" value="TruB_C_2"/>
    <property type="match status" value="1"/>
</dbReference>
<dbReference type="Pfam" id="PF01509">
    <property type="entry name" value="TruB_N"/>
    <property type="match status" value="1"/>
</dbReference>
<dbReference type="SUPFAM" id="SSF55120">
    <property type="entry name" value="Pseudouridine synthase"/>
    <property type="match status" value="1"/>
</dbReference>
<evidence type="ECO:0000255" key="1">
    <source>
        <dbReference type="HAMAP-Rule" id="MF_01080"/>
    </source>
</evidence>
<feature type="chain" id="PRO_0000121908" description="tRNA pseudouridine synthase B">
    <location>
        <begin position="1"/>
        <end position="305"/>
    </location>
</feature>
<feature type="active site" description="Nucleophile" evidence="1">
    <location>
        <position position="39"/>
    </location>
</feature>
<comment type="function">
    <text evidence="1">Responsible for synthesis of pseudouridine from uracil-55 in the psi GC loop of transfer RNAs.</text>
</comment>
<comment type="catalytic activity">
    <reaction evidence="1">
        <text>uridine(55) in tRNA = pseudouridine(55) in tRNA</text>
        <dbReference type="Rhea" id="RHEA:42532"/>
        <dbReference type="Rhea" id="RHEA-COMP:10101"/>
        <dbReference type="Rhea" id="RHEA-COMP:10102"/>
        <dbReference type="ChEBI" id="CHEBI:65314"/>
        <dbReference type="ChEBI" id="CHEBI:65315"/>
        <dbReference type="EC" id="5.4.99.25"/>
    </reaction>
</comment>
<comment type="similarity">
    <text evidence="1">Belongs to the pseudouridine synthase TruB family. Type 1 subfamily.</text>
</comment>
<accession>Q8CMM6</accession>
<sequence>MYNGILPVFKERGLTSHDVVFKLRKILKMKKIGHTGTLDPEVNGVLPICLGDATKVSDYIMEMGKTYHAMITLGKSTTTEDQTGDILETRAVDKNDINEDTIDQVLQQFEGHIQQIPPMYSSVKVNGRKLYEYARNNETVERPKRQVFIKDIHRISEVTFQEQTCHFEVEVTCGKGTYIRTLATDIGLKLGFPAHMSRLTRIASGGFQLESSLTIDQIKELHEHDSLHNELFPIEYGLKGLKSFQVKDSNFKKKICNGQKFHKKVLSQNVKEPFIFVDSSTQKVLAIYIVHPDKPYEIKPKKVFN</sequence>